<reference key="1">
    <citation type="submission" date="2000-02" db="EMBL/GenBank/DDBJ databases">
        <title>Genes for putative enzymes of histidine biosynthesis from the phototrophic sulfur bacterium Thiocapsa roseopersicina.</title>
        <authorList>
            <person name="Milles J."/>
            <person name="Kappler U."/>
            <person name="Truper H.G."/>
            <person name="Dahl C."/>
        </authorList>
    </citation>
    <scope>NUCLEOTIDE SEQUENCE [GENOMIC DNA]</scope>
</reference>
<keyword id="KW-0028">Amino-acid biosynthesis</keyword>
<keyword id="KW-0368">Histidine biosynthesis</keyword>
<keyword id="KW-0479">Metal-binding</keyword>
<keyword id="KW-0520">NAD</keyword>
<keyword id="KW-0560">Oxidoreductase</keyword>
<keyword id="KW-0862">Zinc</keyword>
<organism>
    <name type="scientific">Thiocapsa roseopersicina</name>
    <dbReference type="NCBI Taxonomy" id="1058"/>
    <lineage>
        <taxon>Bacteria</taxon>
        <taxon>Pseudomonadati</taxon>
        <taxon>Pseudomonadota</taxon>
        <taxon>Gammaproteobacteria</taxon>
        <taxon>Chromatiales</taxon>
        <taxon>Chromatiaceae</taxon>
        <taxon>Thiocapsa</taxon>
    </lineage>
</organism>
<sequence>DKIVGPGNIYVATAKRAVFGQVGIDMVAGPSEILVVCDGATDPDWIAMDLFSQAEHDEDAQSILLSWDADFLDRVAASIERLLPSMERETIIATALRGRGAMILARDLDDAIAVANRIAPEHLELSVEDPQAIVGRIRHAGAIFMGRYTAEAIGDYCAGPNHVLPTSRTARFSSPLGVYDFQKRSSLIMASAAGAAQLAKTASVLARGEGLTAHARSAEYRGAVEPAAEPGLS</sequence>
<gene>
    <name type="primary">hisD</name>
</gene>
<dbReference type="EC" id="1.1.1.23"/>
<dbReference type="EMBL" id="AF235018">
    <property type="protein sequence ID" value="AAF44661.1"/>
    <property type="molecule type" value="Genomic_DNA"/>
</dbReference>
<dbReference type="SMR" id="Q9L6I1"/>
<dbReference type="STRING" id="1058.SAMN05421783_110113"/>
<dbReference type="UniPathway" id="UPA00031">
    <property type="reaction ID" value="UER00014"/>
</dbReference>
<dbReference type="GO" id="GO:0005829">
    <property type="term" value="C:cytosol"/>
    <property type="evidence" value="ECO:0007669"/>
    <property type="project" value="TreeGrafter"/>
</dbReference>
<dbReference type="GO" id="GO:0004399">
    <property type="term" value="F:histidinol dehydrogenase activity"/>
    <property type="evidence" value="ECO:0007669"/>
    <property type="project" value="UniProtKB-EC"/>
</dbReference>
<dbReference type="GO" id="GO:0046872">
    <property type="term" value="F:metal ion binding"/>
    <property type="evidence" value="ECO:0007669"/>
    <property type="project" value="UniProtKB-KW"/>
</dbReference>
<dbReference type="GO" id="GO:0051287">
    <property type="term" value="F:NAD binding"/>
    <property type="evidence" value="ECO:0007669"/>
    <property type="project" value="InterPro"/>
</dbReference>
<dbReference type="GO" id="GO:0000105">
    <property type="term" value="P:L-histidine biosynthetic process"/>
    <property type="evidence" value="ECO:0007669"/>
    <property type="project" value="UniProtKB-UniPathway"/>
</dbReference>
<dbReference type="CDD" id="cd06572">
    <property type="entry name" value="Histidinol_dh"/>
    <property type="match status" value="1"/>
</dbReference>
<dbReference type="FunFam" id="3.40.50.1980:FF:000010">
    <property type="entry name" value="Histidinol dehydrogenase"/>
    <property type="match status" value="1"/>
</dbReference>
<dbReference type="Gene3D" id="1.20.5.1300">
    <property type="match status" value="1"/>
</dbReference>
<dbReference type="Gene3D" id="3.40.50.1980">
    <property type="entry name" value="Nitrogenase molybdenum iron protein domain"/>
    <property type="match status" value="2"/>
</dbReference>
<dbReference type="InterPro" id="IPR016161">
    <property type="entry name" value="Ald_DH/histidinol_DH"/>
</dbReference>
<dbReference type="InterPro" id="IPR001692">
    <property type="entry name" value="Histidinol_DH_CS"/>
</dbReference>
<dbReference type="InterPro" id="IPR012131">
    <property type="entry name" value="Hstdl_DH"/>
</dbReference>
<dbReference type="NCBIfam" id="TIGR00069">
    <property type="entry name" value="hisD"/>
    <property type="match status" value="1"/>
</dbReference>
<dbReference type="PANTHER" id="PTHR21256:SF2">
    <property type="entry name" value="HISTIDINE BIOSYNTHESIS TRIFUNCTIONAL PROTEIN"/>
    <property type="match status" value="1"/>
</dbReference>
<dbReference type="PANTHER" id="PTHR21256">
    <property type="entry name" value="HISTIDINOL DEHYDROGENASE HDH"/>
    <property type="match status" value="1"/>
</dbReference>
<dbReference type="Pfam" id="PF00815">
    <property type="entry name" value="Histidinol_dh"/>
    <property type="match status" value="1"/>
</dbReference>
<dbReference type="PRINTS" id="PR00083">
    <property type="entry name" value="HOLDHDRGNASE"/>
</dbReference>
<dbReference type="SUPFAM" id="SSF53720">
    <property type="entry name" value="ALDH-like"/>
    <property type="match status" value="1"/>
</dbReference>
<dbReference type="PROSITE" id="PS00611">
    <property type="entry name" value="HISOL_DEHYDROGENASE"/>
    <property type="match status" value="1"/>
</dbReference>
<protein>
    <recommendedName>
        <fullName>Histidinol dehydrogenase</fullName>
        <shortName>HDH</shortName>
        <ecNumber>1.1.1.23</ecNumber>
    </recommendedName>
</protein>
<evidence type="ECO:0000250" key="1"/>
<evidence type="ECO:0000305" key="2"/>
<name>HISX_THIRO</name>
<feature type="chain" id="PRO_0000135873" description="Histidinol dehydrogenase">
    <location>
        <begin position="1" status="less than"/>
        <end position="233"/>
    </location>
</feature>
<feature type="active site" description="Proton acceptor" evidence="1">
    <location>
        <position position="121"/>
    </location>
</feature>
<feature type="active site" description="Proton acceptor" evidence="1">
    <location>
        <position position="122"/>
    </location>
</feature>
<feature type="binding site" evidence="1">
    <location>
        <position position="31"/>
    </location>
    <ligand>
        <name>substrate</name>
    </ligand>
</feature>
<feature type="binding site" evidence="1">
    <location>
        <position position="53"/>
    </location>
    <ligand>
        <name>substrate</name>
    </ligand>
</feature>
<feature type="binding site" evidence="1">
    <location>
        <position position="53"/>
    </location>
    <ligand>
        <name>Zn(2+)</name>
        <dbReference type="ChEBI" id="CHEBI:29105"/>
    </ligand>
</feature>
<feature type="binding site" evidence="1">
    <location>
        <position position="56"/>
    </location>
    <ligand>
        <name>substrate</name>
    </ligand>
</feature>
<feature type="binding site" evidence="1">
    <location>
        <position position="56"/>
    </location>
    <ligand>
        <name>Zn(2+)</name>
        <dbReference type="ChEBI" id="CHEBI:29105"/>
    </ligand>
</feature>
<feature type="binding site" evidence="1">
    <location>
        <position position="122"/>
    </location>
    <ligand>
        <name>substrate</name>
    </ligand>
</feature>
<feature type="binding site" evidence="1">
    <location>
        <position position="155"/>
    </location>
    <ligand>
        <name>substrate</name>
    </ligand>
</feature>
<feature type="binding site" evidence="1">
    <location>
        <position position="155"/>
    </location>
    <ligand>
        <name>Zn(2+)</name>
        <dbReference type="ChEBI" id="CHEBI:29105"/>
    </ligand>
</feature>
<feature type="binding site" evidence="1">
    <location>
        <position position="209"/>
    </location>
    <ligand>
        <name>substrate</name>
    </ligand>
</feature>
<feature type="binding site" evidence="1">
    <location>
        <position position="214"/>
    </location>
    <ligand>
        <name>substrate</name>
    </ligand>
</feature>
<feature type="binding site" evidence="1">
    <location>
        <position position="214"/>
    </location>
    <ligand>
        <name>Zn(2+)</name>
        <dbReference type="ChEBI" id="CHEBI:29105"/>
    </ligand>
</feature>
<feature type="non-terminal residue">
    <location>
        <position position="1"/>
    </location>
</feature>
<accession>Q9L6I1</accession>
<proteinExistence type="inferred from homology"/>
<comment type="function">
    <text evidence="1">Catalyzes the sequential NAD-dependent oxidations of L-histidinol to L-histidinaldehyde and then to L-histidine.</text>
</comment>
<comment type="catalytic activity">
    <reaction>
        <text>L-histidinol + 2 NAD(+) + H2O = L-histidine + 2 NADH + 3 H(+)</text>
        <dbReference type="Rhea" id="RHEA:20641"/>
        <dbReference type="ChEBI" id="CHEBI:15377"/>
        <dbReference type="ChEBI" id="CHEBI:15378"/>
        <dbReference type="ChEBI" id="CHEBI:57540"/>
        <dbReference type="ChEBI" id="CHEBI:57595"/>
        <dbReference type="ChEBI" id="CHEBI:57699"/>
        <dbReference type="ChEBI" id="CHEBI:57945"/>
        <dbReference type="EC" id="1.1.1.23"/>
    </reaction>
</comment>
<comment type="cofactor">
    <cofactor evidence="1">
        <name>Zn(2+)</name>
        <dbReference type="ChEBI" id="CHEBI:29105"/>
    </cofactor>
    <text evidence="1">Binds 1 zinc ion per subunit.</text>
</comment>
<comment type="pathway">
    <text>Amino-acid biosynthesis; L-histidine biosynthesis; L-histidine from 5-phospho-alpha-D-ribose 1-diphosphate: step 9/9.</text>
</comment>
<comment type="similarity">
    <text evidence="2">Belongs to the histidinol dehydrogenase family.</text>
</comment>